<organism>
    <name type="scientific">Thermococcus gammatolerans (strain DSM 15229 / JCM 11827 / EJ3)</name>
    <dbReference type="NCBI Taxonomy" id="593117"/>
    <lineage>
        <taxon>Archaea</taxon>
        <taxon>Methanobacteriati</taxon>
        <taxon>Methanobacteriota</taxon>
        <taxon>Thermococci</taxon>
        <taxon>Thermococcales</taxon>
        <taxon>Thermococcaceae</taxon>
        <taxon>Thermococcus</taxon>
    </lineage>
</organism>
<reference key="1">
    <citation type="journal article" date="2007" name="Genome Biol.">
        <title>Genome analysis and genome-wide proteomics of Thermococcus gammatolerans, the most radioresistant organism known amongst the Archaea.</title>
        <authorList>
            <person name="Zivanovic Y."/>
            <person name="Armengaud J."/>
            <person name="Lagorce A."/>
            <person name="Leplat C."/>
            <person name="Guerin P."/>
            <person name="Dutertre M."/>
            <person name="Anthouard V."/>
            <person name="Forterre P."/>
            <person name="Wincker P."/>
            <person name="Confalonieri F."/>
        </authorList>
    </citation>
    <scope>NUCLEOTIDE SEQUENCE [LARGE SCALE GENOMIC DNA]</scope>
    <source>
        <strain>DSM 15229 / JCM 11827 / EJ3</strain>
    </source>
</reference>
<feature type="chain" id="PRO_1000215210" description="UPF0282 protein TGAM_0379">
    <location>
        <begin position="1"/>
        <end position="300"/>
    </location>
</feature>
<evidence type="ECO:0000255" key="1">
    <source>
        <dbReference type="HAMAP-Rule" id="MF_01406"/>
    </source>
</evidence>
<keyword id="KW-1185">Reference proteome</keyword>
<name>Y379_THEGJ</name>
<dbReference type="EMBL" id="CP001398">
    <property type="protein sequence ID" value="ACS32881.1"/>
    <property type="molecule type" value="Genomic_DNA"/>
</dbReference>
<dbReference type="RefSeq" id="WP_015857999.1">
    <property type="nucleotide sequence ID" value="NC_012804.1"/>
</dbReference>
<dbReference type="STRING" id="593117.TGAM_0379"/>
<dbReference type="PaxDb" id="593117-TGAM_0379"/>
<dbReference type="GeneID" id="7987845"/>
<dbReference type="KEGG" id="tga:TGAM_0379"/>
<dbReference type="PATRIC" id="fig|593117.10.peg.375"/>
<dbReference type="eggNOG" id="arCOG00969">
    <property type="taxonomic scope" value="Archaea"/>
</dbReference>
<dbReference type="HOGENOM" id="CLU_079268_0_0_2"/>
<dbReference type="OrthoDB" id="21331at2157"/>
<dbReference type="Proteomes" id="UP000001488">
    <property type="component" value="Chromosome"/>
</dbReference>
<dbReference type="Gene3D" id="3.60.15.10">
    <property type="entry name" value="Ribonuclease Z/Hydroxyacylglutathione hydrolase-like"/>
    <property type="match status" value="1"/>
</dbReference>
<dbReference type="HAMAP" id="MF_01406">
    <property type="entry name" value="UPF0282"/>
    <property type="match status" value="1"/>
</dbReference>
<dbReference type="InterPro" id="IPR001279">
    <property type="entry name" value="Metallo-B-lactamas"/>
</dbReference>
<dbReference type="InterPro" id="IPR036866">
    <property type="entry name" value="RibonucZ/Hydroxyglut_hydro"/>
</dbReference>
<dbReference type="InterPro" id="IPR050114">
    <property type="entry name" value="UPF0173_UPF0282_UlaG_hydrolase"/>
</dbReference>
<dbReference type="InterPro" id="IPR014426">
    <property type="entry name" value="UPF0282_hydrls"/>
</dbReference>
<dbReference type="NCBIfam" id="NF003290">
    <property type="entry name" value="PRK04286.1-6"/>
    <property type="match status" value="1"/>
</dbReference>
<dbReference type="PANTHER" id="PTHR43546">
    <property type="entry name" value="UPF0173 METAL-DEPENDENT HYDROLASE MJ1163-RELATED"/>
    <property type="match status" value="1"/>
</dbReference>
<dbReference type="PANTHER" id="PTHR43546:SF4">
    <property type="entry name" value="UPF0282 PROTEIN MJ1629"/>
    <property type="match status" value="1"/>
</dbReference>
<dbReference type="Pfam" id="PF12706">
    <property type="entry name" value="Lactamase_B_2"/>
    <property type="match status" value="1"/>
</dbReference>
<dbReference type="PIRSF" id="PIRSF004944">
    <property type="entry name" value="UCP004944_hydrls"/>
    <property type="match status" value="1"/>
</dbReference>
<dbReference type="SUPFAM" id="SSF56281">
    <property type="entry name" value="Metallo-hydrolase/oxidoreductase"/>
    <property type="match status" value="1"/>
</dbReference>
<protein>
    <recommendedName>
        <fullName evidence="1">UPF0282 protein TGAM_0379</fullName>
    </recommendedName>
</protein>
<proteinExistence type="inferred from homology"/>
<sequence length="300" mass="34208">MRVIPLASESLGVRSLATFVEAGGIKILIDPGVALGPKRYGLPPAKIELETLQKMRRKIQGYARRADVVTISHYHYDHHTPFFEGLYESSSEEYAREIYAGKLLLIKHPRENINFSQRKRAWAFLKNAEPIARRIEFADGRAFDLGGVTLEFSPAVPHGSEGSRLGFVVMVLIDDGSERIIHASDIQLLNRKAVEWIIEKNPDLLITGGPPTYLGKRAEGSWETGIKNLNEIIRETNAEIILDHHIVRDKRYPEFFDELEKRPKTFAGFLKVEDKPLEAYRRELHKRERGESVELPFRVG</sequence>
<accession>C5A3R9</accession>
<comment type="similarity">
    <text evidence="1">Belongs to the UPF0282 family.</text>
</comment>
<gene>
    <name type="ordered locus">TGAM_0379</name>
</gene>